<gene>
    <name evidence="1" type="primary">queA</name>
    <name type="ordered locus">SMU_634</name>
</gene>
<reference key="1">
    <citation type="journal article" date="2002" name="Proc. Natl. Acad. Sci. U.S.A.">
        <title>Genome sequence of Streptococcus mutans UA159, a cariogenic dental pathogen.</title>
        <authorList>
            <person name="Ajdic D.J."/>
            <person name="McShan W.M."/>
            <person name="McLaughlin R.E."/>
            <person name="Savic G."/>
            <person name="Chang J."/>
            <person name="Carson M.B."/>
            <person name="Primeaux C."/>
            <person name="Tian R."/>
            <person name="Kenton S."/>
            <person name="Jia H.G."/>
            <person name="Lin S.P."/>
            <person name="Qian Y."/>
            <person name="Li S."/>
            <person name="Zhu H."/>
            <person name="Najar F.Z."/>
            <person name="Lai H."/>
            <person name="White J."/>
            <person name="Roe B.A."/>
            <person name="Ferretti J.J."/>
        </authorList>
    </citation>
    <scope>NUCLEOTIDE SEQUENCE [LARGE SCALE GENOMIC DNA]</scope>
    <source>
        <strain>ATCC 700610 / UA159</strain>
    </source>
</reference>
<comment type="function">
    <text evidence="1">Transfers and isomerizes the ribose moiety from AdoMet to the 7-aminomethyl group of 7-deazaguanine (preQ1-tRNA) to give epoxyqueuosine (oQ-tRNA).</text>
</comment>
<comment type="catalytic activity">
    <reaction evidence="1">
        <text>7-aminomethyl-7-carbaguanosine(34) in tRNA + S-adenosyl-L-methionine = epoxyqueuosine(34) in tRNA + adenine + L-methionine + 2 H(+)</text>
        <dbReference type="Rhea" id="RHEA:32155"/>
        <dbReference type="Rhea" id="RHEA-COMP:10342"/>
        <dbReference type="Rhea" id="RHEA-COMP:18582"/>
        <dbReference type="ChEBI" id="CHEBI:15378"/>
        <dbReference type="ChEBI" id="CHEBI:16708"/>
        <dbReference type="ChEBI" id="CHEBI:57844"/>
        <dbReference type="ChEBI" id="CHEBI:59789"/>
        <dbReference type="ChEBI" id="CHEBI:82833"/>
        <dbReference type="ChEBI" id="CHEBI:194443"/>
        <dbReference type="EC" id="2.4.99.17"/>
    </reaction>
</comment>
<comment type="pathway">
    <text evidence="1">tRNA modification; tRNA-queuosine biosynthesis.</text>
</comment>
<comment type="subunit">
    <text evidence="1">Monomer.</text>
</comment>
<comment type="subcellular location">
    <subcellularLocation>
        <location evidence="1">Cytoplasm</location>
    </subcellularLocation>
</comment>
<comment type="similarity">
    <text evidence="1">Belongs to the QueA family.</text>
</comment>
<sequence>MNTSDFDFNLPEALIAQTPLKKRDSSKLLVVDHQKKTMKDTHFDHIIDELNSGDALVMNDTRVLPARLHGEKTVTHGHVELLLLKNIQGDQWEVLAKPAKRLKVGSHISFGDGRLKAIIKEELDHGGRIVEFSYEGIFLEVLESLGEMPLPPYIHEKLEDRDRYQTVYAKENGSAAAPTAGLHFTEELLSKIEAKGVKLVYLTLHVGLGTFRPVSVDNVEEHQMHSEFYSLSPEAAQTLKDVKANGGRIVAVGTTSIRTLETIGNKFAGQIEADSGWTNIFIKPGYQFKIVDAFSTNFHLPKSTLVMLVSAFAGRDFILDAYKHAVDKHYRFFSFGDAMFVK</sequence>
<feature type="chain" id="PRO_0000165448" description="S-adenosylmethionine:tRNA ribosyltransferase-isomerase">
    <location>
        <begin position="1"/>
        <end position="342"/>
    </location>
</feature>
<accession>Q8DV72</accession>
<proteinExistence type="inferred from homology"/>
<dbReference type="EC" id="2.4.99.17" evidence="1"/>
<dbReference type="EMBL" id="AE014133">
    <property type="protein sequence ID" value="AAN58368.1"/>
    <property type="molecule type" value="Genomic_DNA"/>
</dbReference>
<dbReference type="RefSeq" id="NP_721062.1">
    <property type="nucleotide sequence ID" value="NC_004350.2"/>
</dbReference>
<dbReference type="RefSeq" id="WP_002261907.1">
    <property type="nucleotide sequence ID" value="NC_004350.2"/>
</dbReference>
<dbReference type="SMR" id="Q8DV72"/>
<dbReference type="STRING" id="210007.SMU_634"/>
<dbReference type="KEGG" id="smu:SMU_634"/>
<dbReference type="PATRIC" id="fig|210007.7.peg.560"/>
<dbReference type="eggNOG" id="COG0809">
    <property type="taxonomic scope" value="Bacteria"/>
</dbReference>
<dbReference type="HOGENOM" id="CLU_039110_1_0_9"/>
<dbReference type="OrthoDB" id="9805933at2"/>
<dbReference type="PhylomeDB" id="Q8DV72"/>
<dbReference type="UniPathway" id="UPA00392"/>
<dbReference type="Proteomes" id="UP000002512">
    <property type="component" value="Chromosome"/>
</dbReference>
<dbReference type="GO" id="GO:0005737">
    <property type="term" value="C:cytoplasm"/>
    <property type="evidence" value="ECO:0007669"/>
    <property type="project" value="UniProtKB-SubCell"/>
</dbReference>
<dbReference type="GO" id="GO:0051075">
    <property type="term" value="F:S-adenosylmethionine:tRNA ribosyltransferase-isomerase activity"/>
    <property type="evidence" value="ECO:0007669"/>
    <property type="project" value="UniProtKB-EC"/>
</dbReference>
<dbReference type="GO" id="GO:0008616">
    <property type="term" value="P:queuosine biosynthetic process"/>
    <property type="evidence" value="ECO:0007669"/>
    <property type="project" value="UniProtKB-UniRule"/>
</dbReference>
<dbReference type="GO" id="GO:0002099">
    <property type="term" value="P:tRNA wobble guanine modification"/>
    <property type="evidence" value="ECO:0007669"/>
    <property type="project" value="TreeGrafter"/>
</dbReference>
<dbReference type="FunFam" id="2.40.10.240:FF:000002">
    <property type="entry name" value="S-adenosylmethionine:tRNA ribosyltransferase-isomerase"/>
    <property type="match status" value="1"/>
</dbReference>
<dbReference type="FunFam" id="3.40.1780.10:FF:000001">
    <property type="entry name" value="S-adenosylmethionine:tRNA ribosyltransferase-isomerase"/>
    <property type="match status" value="1"/>
</dbReference>
<dbReference type="Gene3D" id="2.40.10.240">
    <property type="entry name" value="QueA-like"/>
    <property type="match status" value="1"/>
</dbReference>
<dbReference type="Gene3D" id="3.40.1780.10">
    <property type="entry name" value="QueA-like"/>
    <property type="match status" value="1"/>
</dbReference>
<dbReference type="HAMAP" id="MF_00113">
    <property type="entry name" value="QueA"/>
    <property type="match status" value="1"/>
</dbReference>
<dbReference type="InterPro" id="IPR003699">
    <property type="entry name" value="QueA"/>
</dbReference>
<dbReference type="InterPro" id="IPR042118">
    <property type="entry name" value="QueA_dom1"/>
</dbReference>
<dbReference type="InterPro" id="IPR042119">
    <property type="entry name" value="QueA_dom2"/>
</dbReference>
<dbReference type="InterPro" id="IPR036100">
    <property type="entry name" value="QueA_sf"/>
</dbReference>
<dbReference type="NCBIfam" id="NF001140">
    <property type="entry name" value="PRK00147.1"/>
    <property type="match status" value="1"/>
</dbReference>
<dbReference type="NCBIfam" id="TIGR00113">
    <property type="entry name" value="queA"/>
    <property type="match status" value="1"/>
</dbReference>
<dbReference type="PANTHER" id="PTHR30307">
    <property type="entry name" value="S-ADENOSYLMETHIONINE:TRNA RIBOSYLTRANSFERASE-ISOMERASE"/>
    <property type="match status" value="1"/>
</dbReference>
<dbReference type="PANTHER" id="PTHR30307:SF0">
    <property type="entry name" value="S-ADENOSYLMETHIONINE:TRNA RIBOSYLTRANSFERASE-ISOMERASE"/>
    <property type="match status" value="1"/>
</dbReference>
<dbReference type="Pfam" id="PF02547">
    <property type="entry name" value="Queuosine_synth"/>
    <property type="match status" value="1"/>
</dbReference>
<dbReference type="SUPFAM" id="SSF111337">
    <property type="entry name" value="QueA-like"/>
    <property type="match status" value="1"/>
</dbReference>
<keyword id="KW-0963">Cytoplasm</keyword>
<keyword id="KW-0671">Queuosine biosynthesis</keyword>
<keyword id="KW-1185">Reference proteome</keyword>
<keyword id="KW-0949">S-adenosyl-L-methionine</keyword>
<keyword id="KW-0808">Transferase</keyword>
<protein>
    <recommendedName>
        <fullName evidence="1">S-adenosylmethionine:tRNA ribosyltransferase-isomerase</fullName>
        <ecNumber evidence="1">2.4.99.17</ecNumber>
    </recommendedName>
    <alternativeName>
        <fullName evidence="1">Queuosine biosynthesis protein QueA</fullName>
    </alternativeName>
</protein>
<evidence type="ECO:0000255" key="1">
    <source>
        <dbReference type="HAMAP-Rule" id="MF_00113"/>
    </source>
</evidence>
<name>QUEA_STRMU</name>
<organism>
    <name type="scientific">Streptococcus mutans serotype c (strain ATCC 700610 / UA159)</name>
    <dbReference type="NCBI Taxonomy" id="210007"/>
    <lineage>
        <taxon>Bacteria</taxon>
        <taxon>Bacillati</taxon>
        <taxon>Bacillota</taxon>
        <taxon>Bacilli</taxon>
        <taxon>Lactobacillales</taxon>
        <taxon>Streptococcaceae</taxon>
        <taxon>Streptococcus</taxon>
    </lineage>
</organism>